<evidence type="ECO:0000250" key="1"/>
<evidence type="ECO:0000255" key="2"/>
<evidence type="ECO:0000305" key="3"/>
<sequence length="75" mass="8403">MKLLLFTALVLVVISLIEVEAENERACIPLEKECTKTPGNCCSGLKCDCYRRFEQGVAKGIQCWCIEEDVTYKGV</sequence>
<name>TX601_LYCSI</name>
<organism>
    <name type="scientific">Lycosa singoriensis</name>
    <name type="common">Wolf spider</name>
    <name type="synonym">Aranea singoriensis</name>
    <dbReference type="NCBI Taxonomy" id="434756"/>
    <lineage>
        <taxon>Eukaryota</taxon>
        <taxon>Metazoa</taxon>
        <taxon>Ecdysozoa</taxon>
        <taxon>Arthropoda</taxon>
        <taxon>Chelicerata</taxon>
        <taxon>Arachnida</taxon>
        <taxon>Araneae</taxon>
        <taxon>Araneomorphae</taxon>
        <taxon>Entelegynae</taxon>
        <taxon>Lycosoidea</taxon>
        <taxon>Lycosidae</taxon>
        <taxon>Lycosa</taxon>
    </lineage>
</organism>
<keyword id="KW-1015">Disulfide bond</keyword>
<keyword id="KW-0964">Secreted</keyword>
<keyword id="KW-0732">Signal</keyword>
<keyword id="KW-0800">Toxin</keyword>
<reference key="1">
    <citation type="journal article" date="2010" name="Zoology">
        <title>Transcriptome analysis of the venom glands of the Chinese wolf spider Lycosa singoriensis.</title>
        <authorList>
            <person name="Zhang Y."/>
            <person name="Chen J."/>
            <person name="Tang X."/>
            <person name="Wang F."/>
            <person name="Jiang L."/>
            <person name="Xiong X."/>
            <person name="Wang M."/>
            <person name="Rong M."/>
            <person name="Liu Z."/>
            <person name="Liang S."/>
        </authorList>
    </citation>
    <scope>NUCLEOTIDE SEQUENCE [LARGE SCALE MRNA]</scope>
    <source>
        <tissue>Venom gland</tissue>
    </source>
</reference>
<protein>
    <recommendedName>
        <fullName>U6-lycotoxin-Ls1a</fullName>
    </recommendedName>
    <alternativeName>
        <fullName>Toxin-like structure LSTX-F1</fullName>
    </alternativeName>
</protein>
<proteinExistence type="evidence at transcript level"/>
<dbReference type="EMBL" id="EU926035">
    <property type="protein sequence ID" value="ACI41367.1"/>
    <property type="molecule type" value="mRNA"/>
</dbReference>
<dbReference type="EMBL" id="FM864039">
    <property type="protein sequence ID" value="CAS03636.1"/>
    <property type="molecule type" value="mRNA"/>
</dbReference>
<dbReference type="SMR" id="B6DCV1"/>
<dbReference type="ArachnoServer" id="AS000973">
    <property type="toxin name" value="U6-lycotoxin-Ls1a"/>
</dbReference>
<dbReference type="GO" id="GO:0005576">
    <property type="term" value="C:extracellular region"/>
    <property type="evidence" value="ECO:0007669"/>
    <property type="project" value="UniProtKB-SubCell"/>
</dbReference>
<dbReference type="GO" id="GO:0090729">
    <property type="term" value="F:toxin activity"/>
    <property type="evidence" value="ECO:0007669"/>
    <property type="project" value="UniProtKB-KW"/>
</dbReference>
<dbReference type="InterPro" id="IPR019553">
    <property type="entry name" value="Spider_toxin_CSTX_knottin"/>
</dbReference>
<dbReference type="Pfam" id="PF10530">
    <property type="entry name" value="Toxin_35"/>
    <property type="match status" value="1"/>
</dbReference>
<accession>B6DCV1</accession>
<comment type="subcellular location">
    <subcellularLocation>
        <location evidence="1">Secreted</location>
    </subcellularLocation>
</comment>
<comment type="tissue specificity">
    <text>Expressed by the venom gland.</text>
</comment>
<comment type="PTM">
    <text evidence="1">Contains 4 disulfide bonds.</text>
</comment>
<comment type="similarity">
    <text evidence="3">Belongs to the neurotoxin 19 (CSTX) family. 06 (U6-Lctx) subfamily.</text>
</comment>
<feature type="signal peptide" evidence="2">
    <location>
        <begin position="1"/>
        <end position="21"/>
    </location>
</feature>
<feature type="propeptide" id="PRO_0000401723" evidence="1">
    <location>
        <begin position="22"/>
        <end position="25"/>
    </location>
</feature>
<feature type="chain" id="PRO_0000401724" description="U6-lycotoxin-Ls1a">
    <location>
        <begin position="26"/>
        <end position="75"/>
    </location>
</feature>